<comment type="function">
    <text evidence="2">Catalyzes the reversible hydration of carbon dioxide. Can hydrate cyanamide to urea.</text>
</comment>
<comment type="catalytic activity">
    <reaction evidence="2">
        <text>hydrogencarbonate + H(+) = CO2 + H2O</text>
        <dbReference type="Rhea" id="RHEA:10748"/>
        <dbReference type="ChEBI" id="CHEBI:15377"/>
        <dbReference type="ChEBI" id="CHEBI:15378"/>
        <dbReference type="ChEBI" id="CHEBI:16526"/>
        <dbReference type="ChEBI" id="CHEBI:17544"/>
        <dbReference type="EC" id="4.2.1.1"/>
    </reaction>
</comment>
<comment type="catalytic activity">
    <reaction evidence="2">
        <text>urea = cyanamide + H2O</text>
        <dbReference type="Rhea" id="RHEA:23056"/>
        <dbReference type="ChEBI" id="CHEBI:15377"/>
        <dbReference type="ChEBI" id="CHEBI:16199"/>
        <dbReference type="ChEBI" id="CHEBI:16698"/>
        <dbReference type="EC" id="4.2.1.69"/>
    </reaction>
</comment>
<comment type="cofactor">
    <cofactor evidence="2">
        <name>Zn(2+)</name>
        <dbReference type="ChEBI" id="CHEBI:29105"/>
    </cofactor>
</comment>
<comment type="activity regulation">
    <text evidence="2">Inhibited by acetazolamide.</text>
</comment>
<comment type="subcellular location">
    <subcellularLocation>
        <location evidence="1">Cytoplasm</location>
    </subcellularLocation>
</comment>
<comment type="similarity">
    <text evidence="6">Belongs to the alpha-carbonic anhydrase family.</text>
</comment>
<sequence>MASPDWGYDGENGPEHWCKLHPIANGNNQSPIDIKTSETKRDPSLKPLSISYNPATAKEIVNVGHSFHVNFEDSDNRSVLKGGPLPESYRLRQFHFHWGSTDDCGSEHLVDGATFSAELHLVHWNSAKYPSFADAASQADGLVVVGVLMKVGQANPNLQKVLDALKTVKTKNKKAPFTNFDPSVLLPSCPDYWAYFGSLTHPPLHESVTWIIFKETISVSAEQLAQFRSLLANAEGDKEVCIKQNYRPPQPLKGRTVKASF</sequence>
<feature type="initiator methionine" description="Removed" evidence="2">
    <location>
        <position position="1"/>
    </location>
</feature>
<feature type="chain" id="PRO_0000077416" description="Carbonic anhydrase 1">
    <location>
        <begin position="2"/>
        <end position="261"/>
    </location>
</feature>
<feature type="domain" description="Alpha-carbonic anhydrase" evidence="4">
    <location>
        <begin position="4"/>
        <end position="261"/>
    </location>
</feature>
<feature type="region of interest" description="Disordered" evidence="5">
    <location>
        <begin position="22"/>
        <end position="41"/>
    </location>
</feature>
<feature type="active site" description="Proton donor/acceptor" evidence="3">
    <location>
        <position position="65"/>
    </location>
</feature>
<feature type="binding site" evidence="2">
    <location>
        <position position="95"/>
    </location>
    <ligand>
        <name>Zn(2+)</name>
        <dbReference type="ChEBI" id="CHEBI:29105"/>
        <note>catalytic</note>
    </ligand>
</feature>
<feature type="binding site" evidence="2">
    <location>
        <position position="97"/>
    </location>
    <ligand>
        <name>Zn(2+)</name>
        <dbReference type="ChEBI" id="CHEBI:29105"/>
        <note>catalytic</note>
    </ligand>
</feature>
<feature type="binding site" evidence="2">
    <location>
        <position position="120"/>
    </location>
    <ligand>
        <name>Zn(2+)</name>
        <dbReference type="ChEBI" id="CHEBI:29105"/>
        <note>catalytic</note>
    </ligand>
</feature>
<feature type="binding site" evidence="3">
    <location>
        <begin position="200"/>
        <end position="201"/>
    </location>
    <ligand>
        <name>substrate</name>
    </ligand>
</feature>
<feature type="binding site" evidence="2">
    <location>
        <position position="200"/>
    </location>
    <ligand>
        <name>substrate</name>
    </ligand>
</feature>
<feature type="modified residue" description="N-acetylalanine" evidence="2">
    <location>
        <position position="2"/>
    </location>
</feature>
<proteinExistence type="evidence at transcript level"/>
<dbReference type="EC" id="4.2.1.1" evidence="2"/>
<dbReference type="EC" id="4.2.1.69" evidence="2"/>
<dbReference type="EMBL" id="L42178">
    <property type="protein sequence ID" value="AAC41634.1"/>
    <property type="molecule type" value="mRNA"/>
</dbReference>
<dbReference type="RefSeq" id="NP_001009771.1">
    <property type="nucleotide sequence ID" value="NM_001009771.1"/>
</dbReference>
<dbReference type="SMR" id="P48282"/>
<dbReference type="STRING" id="9940.ENSOARP00000014236"/>
<dbReference type="PaxDb" id="9940-ENSOARP00000014236"/>
<dbReference type="Ensembl" id="ENSOART00020011614">
    <property type="protein sequence ID" value="ENSOARP00020009550"/>
    <property type="gene ID" value="ENSOARG00020031976"/>
</dbReference>
<dbReference type="Ensembl" id="ENSOART00025008171">
    <property type="protein sequence ID" value="ENSOARP00025004094"/>
    <property type="gene ID" value="ENSOARG00025004963"/>
</dbReference>
<dbReference type="Ensembl" id="ENSOART00040008705">
    <property type="protein sequence ID" value="ENSOARP00040004519"/>
    <property type="gene ID" value="ENSOARG00040005294"/>
</dbReference>
<dbReference type="Ensembl" id="ENSOART00185012421">
    <property type="protein sequence ID" value="ENSOARP00185006023"/>
    <property type="gene ID" value="ENSOARG00185007763"/>
</dbReference>
<dbReference type="Ensembl" id="ENSOART00215070053">
    <property type="protein sequence ID" value="ENSOARP00215037527"/>
    <property type="gene ID" value="ENSOARG00215041498"/>
</dbReference>
<dbReference type="GeneID" id="443309"/>
<dbReference type="KEGG" id="oas:443309"/>
<dbReference type="CTD" id="759"/>
<dbReference type="eggNOG" id="KOG0382">
    <property type="taxonomic scope" value="Eukaryota"/>
</dbReference>
<dbReference type="OrthoDB" id="429145at2759"/>
<dbReference type="Proteomes" id="UP000002356">
    <property type="component" value="Unplaced"/>
</dbReference>
<dbReference type="GO" id="GO:0005737">
    <property type="term" value="C:cytoplasm"/>
    <property type="evidence" value="ECO:0007669"/>
    <property type="project" value="UniProtKB-SubCell"/>
</dbReference>
<dbReference type="GO" id="GO:0004089">
    <property type="term" value="F:carbonate dehydratase activity"/>
    <property type="evidence" value="ECO:0000250"/>
    <property type="project" value="UniProtKB"/>
</dbReference>
<dbReference type="GO" id="GO:0018820">
    <property type="term" value="F:cyanamide hydratase activity"/>
    <property type="evidence" value="ECO:0000250"/>
    <property type="project" value="UniProtKB"/>
</dbReference>
<dbReference type="GO" id="GO:0008270">
    <property type="term" value="F:zinc ion binding"/>
    <property type="evidence" value="ECO:0007669"/>
    <property type="project" value="InterPro"/>
</dbReference>
<dbReference type="FunFam" id="3.10.200.10:FF:000001">
    <property type="entry name" value="Carbonic anhydrase 2"/>
    <property type="match status" value="1"/>
</dbReference>
<dbReference type="Gene3D" id="3.10.200.10">
    <property type="entry name" value="Alpha carbonic anhydrase"/>
    <property type="match status" value="1"/>
</dbReference>
<dbReference type="InterPro" id="IPR001148">
    <property type="entry name" value="CA_dom"/>
</dbReference>
<dbReference type="InterPro" id="IPR036398">
    <property type="entry name" value="CA_dom_sf"/>
</dbReference>
<dbReference type="InterPro" id="IPR023561">
    <property type="entry name" value="Carbonic_anhydrase_a-class"/>
</dbReference>
<dbReference type="InterPro" id="IPR018338">
    <property type="entry name" value="Carbonic_anhydrase_a-class_CS"/>
</dbReference>
<dbReference type="PANTHER" id="PTHR18952">
    <property type="entry name" value="CARBONIC ANHYDRASE"/>
    <property type="match status" value="1"/>
</dbReference>
<dbReference type="PANTHER" id="PTHR18952:SF282">
    <property type="entry name" value="CARBONIC ANHYDRASE 1"/>
    <property type="match status" value="1"/>
</dbReference>
<dbReference type="Pfam" id="PF00194">
    <property type="entry name" value="Carb_anhydrase"/>
    <property type="match status" value="1"/>
</dbReference>
<dbReference type="SMART" id="SM01057">
    <property type="entry name" value="Carb_anhydrase"/>
    <property type="match status" value="1"/>
</dbReference>
<dbReference type="SUPFAM" id="SSF51069">
    <property type="entry name" value="Carbonic anhydrase"/>
    <property type="match status" value="1"/>
</dbReference>
<dbReference type="PROSITE" id="PS00162">
    <property type="entry name" value="ALPHA_CA_1"/>
    <property type="match status" value="1"/>
</dbReference>
<dbReference type="PROSITE" id="PS51144">
    <property type="entry name" value="ALPHA_CA_2"/>
    <property type="match status" value="1"/>
</dbReference>
<name>CAH1_SHEEP</name>
<accession>P48282</accession>
<reference key="1">
    <citation type="journal article" date="1996" name="J. Anim. Sci.">
        <title>Isolation and characterization of a cDNA clone encoding ovine type I carbonic anhydrase.</title>
        <authorList>
            <person name="Wang L.Q."/>
            <person name="Baldwin R.L."/>
            <person name="Jesse B.W."/>
        </authorList>
    </citation>
    <scope>NUCLEOTIDE SEQUENCE [MRNA]</scope>
    <source>
        <strain>Dorset</strain>
        <tissue>Ruminal epithelium</tissue>
    </source>
</reference>
<organism>
    <name type="scientific">Ovis aries</name>
    <name type="common">Sheep</name>
    <dbReference type="NCBI Taxonomy" id="9940"/>
    <lineage>
        <taxon>Eukaryota</taxon>
        <taxon>Metazoa</taxon>
        <taxon>Chordata</taxon>
        <taxon>Craniata</taxon>
        <taxon>Vertebrata</taxon>
        <taxon>Euteleostomi</taxon>
        <taxon>Mammalia</taxon>
        <taxon>Eutheria</taxon>
        <taxon>Laurasiatheria</taxon>
        <taxon>Artiodactyla</taxon>
        <taxon>Ruminantia</taxon>
        <taxon>Pecora</taxon>
        <taxon>Bovidae</taxon>
        <taxon>Caprinae</taxon>
        <taxon>Ovis</taxon>
    </lineage>
</organism>
<gene>
    <name type="primary">CA1</name>
</gene>
<protein>
    <recommendedName>
        <fullName>Carbonic anhydrase 1</fullName>
        <ecNumber evidence="2">4.2.1.1</ecNumber>
    </recommendedName>
    <alternativeName>
        <fullName>Carbonate dehydratase I</fullName>
    </alternativeName>
    <alternativeName>
        <fullName>Carbonic anhydrase I</fullName>
        <shortName>CA-I</shortName>
    </alternativeName>
    <alternativeName>
        <fullName>Cyanamide hydratase CA1</fullName>
        <ecNumber evidence="2">4.2.1.69</ecNumber>
    </alternativeName>
</protein>
<keyword id="KW-0007">Acetylation</keyword>
<keyword id="KW-0963">Cytoplasm</keyword>
<keyword id="KW-0456">Lyase</keyword>
<keyword id="KW-0479">Metal-binding</keyword>
<keyword id="KW-1185">Reference proteome</keyword>
<keyword id="KW-0862">Zinc</keyword>
<evidence type="ECO:0000250" key="1">
    <source>
        <dbReference type="UniProtKB" id="B0BNN3"/>
    </source>
</evidence>
<evidence type="ECO:0000250" key="2">
    <source>
        <dbReference type="UniProtKB" id="P00915"/>
    </source>
</evidence>
<evidence type="ECO:0000250" key="3">
    <source>
        <dbReference type="UniProtKB" id="P00918"/>
    </source>
</evidence>
<evidence type="ECO:0000255" key="4">
    <source>
        <dbReference type="PROSITE-ProRule" id="PRU01134"/>
    </source>
</evidence>
<evidence type="ECO:0000256" key="5">
    <source>
        <dbReference type="SAM" id="MobiDB-lite"/>
    </source>
</evidence>
<evidence type="ECO:0000305" key="6"/>